<organism>
    <name type="scientific">Paraburkholderia xenovorans (strain LB400)</name>
    <dbReference type="NCBI Taxonomy" id="266265"/>
    <lineage>
        <taxon>Bacteria</taxon>
        <taxon>Pseudomonadati</taxon>
        <taxon>Pseudomonadota</taxon>
        <taxon>Betaproteobacteria</taxon>
        <taxon>Burkholderiales</taxon>
        <taxon>Burkholderiaceae</taxon>
        <taxon>Paraburkholderia</taxon>
    </lineage>
</organism>
<comment type="function">
    <text evidence="1">Cell wall formation. Catalyzes the addition of glutamate to the nucleotide precursor UDP-N-acetylmuramoyl-L-alanine (UMA).</text>
</comment>
<comment type="catalytic activity">
    <reaction evidence="1">
        <text>UDP-N-acetyl-alpha-D-muramoyl-L-alanine + D-glutamate + ATP = UDP-N-acetyl-alpha-D-muramoyl-L-alanyl-D-glutamate + ADP + phosphate + H(+)</text>
        <dbReference type="Rhea" id="RHEA:16429"/>
        <dbReference type="ChEBI" id="CHEBI:15378"/>
        <dbReference type="ChEBI" id="CHEBI:29986"/>
        <dbReference type="ChEBI" id="CHEBI:30616"/>
        <dbReference type="ChEBI" id="CHEBI:43474"/>
        <dbReference type="ChEBI" id="CHEBI:83898"/>
        <dbReference type="ChEBI" id="CHEBI:83900"/>
        <dbReference type="ChEBI" id="CHEBI:456216"/>
        <dbReference type="EC" id="6.3.2.9"/>
    </reaction>
</comment>
<comment type="pathway">
    <text evidence="1">Cell wall biogenesis; peptidoglycan biosynthesis.</text>
</comment>
<comment type="subcellular location">
    <subcellularLocation>
        <location evidence="1">Cytoplasm</location>
    </subcellularLocation>
</comment>
<comment type="similarity">
    <text evidence="1">Belongs to the MurCDEF family.</text>
</comment>
<sequence length="504" mass="53592">MFGEKFRDRQKPMVLVLGLGESGLAMARWCARHGCRLRAADTREVPPNLSALEAHGVDAQFVGGPFSPVLLEGVELVAISPGLSPLAADLLPLIAAAREQGIPVWGELEFFSQALKTLGESGYAPKVIAITGTNGKTTTTSLTGLLCERAGRKVAVAGNISPALLDKLSEAIDNTALPDVWVLELSSFQLETAHTFSPDAAVVLNITQDHLDWHGGLDAYAAAKGRIFGTQTVRVLNRDDSRVMKLAPSEDSEAGMVTFGVTEPKNEGDYGLLRDNGMIWLVEAHDRDASDEPAPKRRRKNEVATPPNIALKRLMPADALRIRGLHNAANALAAYALARAIGLPGASLLHGLREYRGEPHRVELIASIDGIDYVDDSKGTNVGATVAALDGLAQRVVLIAGGDGKGQDFEPLAAPVMRWCRAVMLIGRDAPQIRAALEDTGIAMTDHATLEEATRAAAALAQPGDAVLLSPACASFDMFKGYAHRAAVFRGTVEEIAAERGTMI</sequence>
<keyword id="KW-0067">ATP-binding</keyword>
<keyword id="KW-0131">Cell cycle</keyword>
<keyword id="KW-0132">Cell division</keyword>
<keyword id="KW-0133">Cell shape</keyword>
<keyword id="KW-0961">Cell wall biogenesis/degradation</keyword>
<keyword id="KW-0963">Cytoplasm</keyword>
<keyword id="KW-0436">Ligase</keyword>
<keyword id="KW-0547">Nucleotide-binding</keyword>
<keyword id="KW-0573">Peptidoglycan synthesis</keyword>
<keyword id="KW-1185">Reference proteome</keyword>
<evidence type="ECO:0000255" key="1">
    <source>
        <dbReference type="HAMAP-Rule" id="MF_00639"/>
    </source>
</evidence>
<evidence type="ECO:0000256" key="2">
    <source>
        <dbReference type="SAM" id="MobiDB-lite"/>
    </source>
</evidence>
<reference key="1">
    <citation type="journal article" date="2006" name="Proc. Natl. Acad. Sci. U.S.A.">
        <title>Burkholderia xenovorans LB400 harbors a multi-replicon, 9.73-Mbp genome shaped for versatility.</title>
        <authorList>
            <person name="Chain P.S.G."/>
            <person name="Denef V.J."/>
            <person name="Konstantinidis K.T."/>
            <person name="Vergez L.M."/>
            <person name="Agullo L."/>
            <person name="Reyes V.L."/>
            <person name="Hauser L."/>
            <person name="Cordova M."/>
            <person name="Gomez L."/>
            <person name="Gonzalez M."/>
            <person name="Land M."/>
            <person name="Lao V."/>
            <person name="Larimer F."/>
            <person name="LiPuma J.J."/>
            <person name="Mahenthiralingam E."/>
            <person name="Malfatti S.A."/>
            <person name="Marx C.J."/>
            <person name="Parnell J.J."/>
            <person name="Ramette A."/>
            <person name="Richardson P."/>
            <person name="Seeger M."/>
            <person name="Smith D."/>
            <person name="Spilker T."/>
            <person name="Sul W.J."/>
            <person name="Tsoi T.V."/>
            <person name="Ulrich L.E."/>
            <person name="Zhulin I.B."/>
            <person name="Tiedje J.M."/>
        </authorList>
    </citation>
    <scope>NUCLEOTIDE SEQUENCE [LARGE SCALE GENOMIC DNA]</scope>
    <source>
        <strain>LB400</strain>
    </source>
</reference>
<proteinExistence type="inferred from homology"/>
<protein>
    <recommendedName>
        <fullName evidence="1">UDP-N-acetylmuramoylalanine--D-glutamate ligase</fullName>
        <ecNumber evidence="1">6.3.2.9</ecNumber>
    </recommendedName>
    <alternativeName>
        <fullName evidence="1">D-glutamic acid-adding enzyme</fullName>
    </alternativeName>
    <alternativeName>
        <fullName evidence="1">UDP-N-acetylmuramoyl-L-alanyl-D-glutamate synthetase</fullName>
    </alternativeName>
</protein>
<name>MURD_PARXL</name>
<accession>Q13TZ0</accession>
<gene>
    <name evidence="1" type="primary">murD</name>
    <name type="ordered locus">Bxeno_A3911</name>
    <name type="ORF">Bxe_A0484</name>
</gene>
<feature type="chain" id="PRO_0000257174" description="UDP-N-acetylmuramoylalanine--D-glutamate ligase">
    <location>
        <begin position="1"/>
        <end position="504"/>
    </location>
</feature>
<feature type="region of interest" description="Disordered" evidence="2">
    <location>
        <begin position="286"/>
        <end position="305"/>
    </location>
</feature>
<feature type="compositionally biased region" description="Basic and acidic residues" evidence="2">
    <location>
        <begin position="286"/>
        <end position="295"/>
    </location>
</feature>
<feature type="binding site" evidence="1">
    <location>
        <begin position="132"/>
        <end position="138"/>
    </location>
    <ligand>
        <name>ATP</name>
        <dbReference type="ChEBI" id="CHEBI:30616"/>
    </ligand>
</feature>
<dbReference type="EC" id="6.3.2.9" evidence="1"/>
<dbReference type="EMBL" id="CP000270">
    <property type="protein sequence ID" value="ABE32449.1"/>
    <property type="molecule type" value="Genomic_DNA"/>
</dbReference>
<dbReference type="RefSeq" id="WP_011489919.1">
    <property type="nucleotide sequence ID" value="NC_007951.1"/>
</dbReference>
<dbReference type="SMR" id="Q13TZ0"/>
<dbReference type="STRING" id="266265.Bxe_A0484"/>
<dbReference type="KEGG" id="bxb:DR64_2660"/>
<dbReference type="KEGG" id="bxe:Bxe_A0484"/>
<dbReference type="PATRIC" id="fig|266265.5.peg.4132"/>
<dbReference type="eggNOG" id="COG0771">
    <property type="taxonomic scope" value="Bacteria"/>
</dbReference>
<dbReference type="OrthoDB" id="9809796at2"/>
<dbReference type="UniPathway" id="UPA00219"/>
<dbReference type="Proteomes" id="UP000001817">
    <property type="component" value="Chromosome 1"/>
</dbReference>
<dbReference type="GO" id="GO:0005737">
    <property type="term" value="C:cytoplasm"/>
    <property type="evidence" value="ECO:0007669"/>
    <property type="project" value="UniProtKB-SubCell"/>
</dbReference>
<dbReference type="GO" id="GO:0005524">
    <property type="term" value="F:ATP binding"/>
    <property type="evidence" value="ECO:0007669"/>
    <property type="project" value="UniProtKB-UniRule"/>
</dbReference>
<dbReference type="GO" id="GO:0008764">
    <property type="term" value="F:UDP-N-acetylmuramoylalanine-D-glutamate ligase activity"/>
    <property type="evidence" value="ECO:0007669"/>
    <property type="project" value="UniProtKB-UniRule"/>
</dbReference>
<dbReference type="GO" id="GO:0051301">
    <property type="term" value="P:cell division"/>
    <property type="evidence" value="ECO:0007669"/>
    <property type="project" value="UniProtKB-KW"/>
</dbReference>
<dbReference type="GO" id="GO:0071555">
    <property type="term" value="P:cell wall organization"/>
    <property type="evidence" value="ECO:0007669"/>
    <property type="project" value="UniProtKB-KW"/>
</dbReference>
<dbReference type="GO" id="GO:0009252">
    <property type="term" value="P:peptidoglycan biosynthetic process"/>
    <property type="evidence" value="ECO:0007669"/>
    <property type="project" value="UniProtKB-UniRule"/>
</dbReference>
<dbReference type="GO" id="GO:0008360">
    <property type="term" value="P:regulation of cell shape"/>
    <property type="evidence" value="ECO:0007669"/>
    <property type="project" value="UniProtKB-KW"/>
</dbReference>
<dbReference type="Gene3D" id="3.90.190.20">
    <property type="entry name" value="Mur ligase, C-terminal domain"/>
    <property type="match status" value="1"/>
</dbReference>
<dbReference type="Gene3D" id="3.40.1190.10">
    <property type="entry name" value="Mur-like, catalytic domain"/>
    <property type="match status" value="1"/>
</dbReference>
<dbReference type="Gene3D" id="3.40.50.720">
    <property type="entry name" value="NAD(P)-binding Rossmann-like Domain"/>
    <property type="match status" value="1"/>
</dbReference>
<dbReference type="HAMAP" id="MF_00639">
    <property type="entry name" value="MurD"/>
    <property type="match status" value="1"/>
</dbReference>
<dbReference type="InterPro" id="IPR036565">
    <property type="entry name" value="Mur-like_cat_sf"/>
</dbReference>
<dbReference type="InterPro" id="IPR004101">
    <property type="entry name" value="Mur_ligase_C"/>
</dbReference>
<dbReference type="InterPro" id="IPR036615">
    <property type="entry name" value="Mur_ligase_C_dom_sf"/>
</dbReference>
<dbReference type="InterPro" id="IPR013221">
    <property type="entry name" value="Mur_ligase_cen"/>
</dbReference>
<dbReference type="InterPro" id="IPR005762">
    <property type="entry name" value="MurD"/>
</dbReference>
<dbReference type="NCBIfam" id="TIGR01087">
    <property type="entry name" value="murD"/>
    <property type="match status" value="1"/>
</dbReference>
<dbReference type="PANTHER" id="PTHR43692">
    <property type="entry name" value="UDP-N-ACETYLMURAMOYLALANINE--D-GLUTAMATE LIGASE"/>
    <property type="match status" value="1"/>
</dbReference>
<dbReference type="PANTHER" id="PTHR43692:SF1">
    <property type="entry name" value="UDP-N-ACETYLMURAMOYLALANINE--D-GLUTAMATE LIGASE"/>
    <property type="match status" value="1"/>
</dbReference>
<dbReference type="Pfam" id="PF02875">
    <property type="entry name" value="Mur_ligase_C"/>
    <property type="match status" value="1"/>
</dbReference>
<dbReference type="Pfam" id="PF08245">
    <property type="entry name" value="Mur_ligase_M"/>
    <property type="match status" value="1"/>
</dbReference>
<dbReference type="Pfam" id="PF21799">
    <property type="entry name" value="MurD-like_N"/>
    <property type="match status" value="1"/>
</dbReference>
<dbReference type="SUPFAM" id="SSF51984">
    <property type="entry name" value="MurCD N-terminal domain"/>
    <property type="match status" value="1"/>
</dbReference>
<dbReference type="SUPFAM" id="SSF53623">
    <property type="entry name" value="MurD-like peptide ligases, catalytic domain"/>
    <property type="match status" value="1"/>
</dbReference>
<dbReference type="SUPFAM" id="SSF53244">
    <property type="entry name" value="MurD-like peptide ligases, peptide-binding domain"/>
    <property type="match status" value="1"/>
</dbReference>